<comment type="function">
    <text evidence="1">Catalyzes the anti-1,4-elimination of the C-3 phosphate and the C-6 proR hydrogen from 5-enolpyruvylshikimate-3-phosphate (EPSP) to yield chorismate, which is the branch point compound that serves as the starting substrate for the three terminal pathways of aromatic amino acid biosynthesis. This reaction introduces a second double bond into the aromatic ring system.</text>
</comment>
<comment type="catalytic activity">
    <reaction evidence="1">
        <text>5-O-(1-carboxyvinyl)-3-phosphoshikimate = chorismate + phosphate</text>
        <dbReference type="Rhea" id="RHEA:21020"/>
        <dbReference type="ChEBI" id="CHEBI:29748"/>
        <dbReference type="ChEBI" id="CHEBI:43474"/>
        <dbReference type="ChEBI" id="CHEBI:57701"/>
        <dbReference type="EC" id="4.2.3.5"/>
    </reaction>
</comment>
<comment type="cofactor">
    <cofactor evidence="1">
        <name>FMNH2</name>
        <dbReference type="ChEBI" id="CHEBI:57618"/>
    </cofactor>
    <text evidence="1">Reduced FMN (FMNH(2)).</text>
</comment>
<comment type="pathway">
    <text evidence="1">Metabolic intermediate biosynthesis; chorismate biosynthesis; chorismate from D-erythrose 4-phosphate and phosphoenolpyruvate: step 7/7.</text>
</comment>
<comment type="subunit">
    <text evidence="1">Homotetramer.</text>
</comment>
<comment type="similarity">
    <text evidence="1">Belongs to the chorismate synthase family.</text>
</comment>
<evidence type="ECO:0000255" key="1">
    <source>
        <dbReference type="HAMAP-Rule" id="MF_00300"/>
    </source>
</evidence>
<name>AROC_CHLL2</name>
<proteinExistence type="inferred from homology"/>
<sequence length="397" mass="42799">MIRYLTSGESHGPALTAIVDGLPAGIDITQNDIDSQLLRRQQGYGRGGRMTIESDKAEVMSGIRFGKSIGSPITLLIRNRDWENWTTTMARFEEPVEEIAKISIPRPGHADLAGRIKYGFNDIRPVIERSSARETAARVAAGSLSRVFLKALGIEIGSYVSAIGSAAEPTVNPAVEELLVNGAECLALEADRSSVRMLNKSAEAGAIAAIDEVKKQGDTLGGIIEIFITGVPMGLGSYVQHDRRLDAMLVSALMSIQAIKGAEIGHAFENSRKPGSQVHDEFFLSENTGLERKTNRAGGLEGSMSSGQTIHLRAAMKPISSLVTPLHSFDLETMKPTLSRFERSDTCAVPAAGVVAEAVVAPVIANALLEKLGGDHFIEIKSRLETYRDHLHRTFKA</sequence>
<dbReference type="EC" id="4.2.3.5" evidence="1"/>
<dbReference type="EMBL" id="CP001097">
    <property type="protein sequence ID" value="ACD89960.1"/>
    <property type="molecule type" value="Genomic_DNA"/>
</dbReference>
<dbReference type="RefSeq" id="WP_012465839.1">
    <property type="nucleotide sequence ID" value="NC_010803.1"/>
</dbReference>
<dbReference type="SMR" id="B3EID0"/>
<dbReference type="STRING" id="290315.Clim_0881"/>
<dbReference type="KEGG" id="cli:Clim_0881"/>
<dbReference type="eggNOG" id="COG0082">
    <property type="taxonomic scope" value="Bacteria"/>
</dbReference>
<dbReference type="HOGENOM" id="CLU_034547_2_0_10"/>
<dbReference type="OrthoDB" id="9771806at2"/>
<dbReference type="UniPathway" id="UPA00053">
    <property type="reaction ID" value="UER00090"/>
</dbReference>
<dbReference type="Proteomes" id="UP000008841">
    <property type="component" value="Chromosome"/>
</dbReference>
<dbReference type="GO" id="GO:0005829">
    <property type="term" value="C:cytosol"/>
    <property type="evidence" value="ECO:0007669"/>
    <property type="project" value="TreeGrafter"/>
</dbReference>
<dbReference type="GO" id="GO:0004107">
    <property type="term" value="F:chorismate synthase activity"/>
    <property type="evidence" value="ECO:0007669"/>
    <property type="project" value="UniProtKB-UniRule"/>
</dbReference>
<dbReference type="GO" id="GO:0010181">
    <property type="term" value="F:FMN binding"/>
    <property type="evidence" value="ECO:0007669"/>
    <property type="project" value="TreeGrafter"/>
</dbReference>
<dbReference type="GO" id="GO:0008652">
    <property type="term" value="P:amino acid biosynthetic process"/>
    <property type="evidence" value="ECO:0007669"/>
    <property type="project" value="UniProtKB-KW"/>
</dbReference>
<dbReference type="GO" id="GO:0009073">
    <property type="term" value="P:aromatic amino acid family biosynthetic process"/>
    <property type="evidence" value="ECO:0007669"/>
    <property type="project" value="UniProtKB-KW"/>
</dbReference>
<dbReference type="GO" id="GO:0009423">
    <property type="term" value="P:chorismate biosynthetic process"/>
    <property type="evidence" value="ECO:0007669"/>
    <property type="project" value="UniProtKB-UniRule"/>
</dbReference>
<dbReference type="CDD" id="cd07304">
    <property type="entry name" value="Chorismate_synthase"/>
    <property type="match status" value="1"/>
</dbReference>
<dbReference type="FunFam" id="3.60.150.10:FF:000002">
    <property type="entry name" value="Chorismate synthase"/>
    <property type="match status" value="1"/>
</dbReference>
<dbReference type="Gene3D" id="3.60.150.10">
    <property type="entry name" value="Chorismate synthase AroC"/>
    <property type="match status" value="1"/>
</dbReference>
<dbReference type="HAMAP" id="MF_00300">
    <property type="entry name" value="Chorismate_synth"/>
    <property type="match status" value="1"/>
</dbReference>
<dbReference type="InterPro" id="IPR000453">
    <property type="entry name" value="Chorismate_synth"/>
</dbReference>
<dbReference type="InterPro" id="IPR035904">
    <property type="entry name" value="Chorismate_synth_AroC_sf"/>
</dbReference>
<dbReference type="InterPro" id="IPR020541">
    <property type="entry name" value="Chorismate_synthase_CS"/>
</dbReference>
<dbReference type="NCBIfam" id="TIGR00033">
    <property type="entry name" value="aroC"/>
    <property type="match status" value="1"/>
</dbReference>
<dbReference type="NCBIfam" id="NF003793">
    <property type="entry name" value="PRK05382.1"/>
    <property type="match status" value="1"/>
</dbReference>
<dbReference type="PANTHER" id="PTHR21085">
    <property type="entry name" value="CHORISMATE SYNTHASE"/>
    <property type="match status" value="1"/>
</dbReference>
<dbReference type="PANTHER" id="PTHR21085:SF0">
    <property type="entry name" value="CHORISMATE SYNTHASE"/>
    <property type="match status" value="1"/>
</dbReference>
<dbReference type="Pfam" id="PF01264">
    <property type="entry name" value="Chorismate_synt"/>
    <property type="match status" value="1"/>
</dbReference>
<dbReference type="PIRSF" id="PIRSF001456">
    <property type="entry name" value="Chorismate_synth"/>
    <property type="match status" value="1"/>
</dbReference>
<dbReference type="SUPFAM" id="SSF103263">
    <property type="entry name" value="Chorismate synthase, AroC"/>
    <property type="match status" value="1"/>
</dbReference>
<dbReference type="PROSITE" id="PS00787">
    <property type="entry name" value="CHORISMATE_SYNTHASE_1"/>
    <property type="match status" value="1"/>
</dbReference>
<dbReference type="PROSITE" id="PS00788">
    <property type="entry name" value="CHORISMATE_SYNTHASE_2"/>
    <property type="match status" value="1"/>
</dbReference>
<gene>
    <name evidence="1" type="primary">aroC</name>
    <name type="ordered locus">Clim_0881</name>
</gene>
<keyword id="KW-0028">Amino-acid biosynthesis</keyword>
<keyword id="KW-0057">Aromatic amino acid biosynthesis</keyword>
<keyword id="KW-0274">FAD</keyword>
<keyword id="KW-0285">Flavoprotein</keyword>
<keyword id="KW-0288">FMN</keyword>
<keyword id="KW-0456">Lyase</keyword>
<keyword id="KW-0521">NADP</keyword>
<accession>B3EID0</accession>
<feature type="chain" id="PRO_1000115339" description="Chorismate synthase">
    <location>
        <begin position="1"/>
        <end position="397"/>
    </location>
</feature>
<feature type="binding site" evidence="1">
    <location>
        <position position="40"/>
    </location>
    <ligand>
        <name>NADP(+)</name>
        <dbReference type="ChEBI" id="CHEBI:58349"/>
    </ligand>
</feature>
<feature type="binding site" evidence="1">
    <location>
        <position position="46"/>
    </location>
    <ligand>
        <name>NADP(+)</name>
        <dbReference type="ChEBI" id="CHEBI:58349"/>
    </ligand>
</feature>
<feature type="binding site" evidence="1">
    <location>
        <begin position="129"/>
        <end position="131"/>
    </location>
    <ligand>
        <name>FMN</name>
        <dbReference type="ChEBI" id="CHEBI:58210"/>
    </ligand>
</feature>
<feature type="binding site" evidence="1">
    <location>
        <begin position="257"/>
        <end position="258"/>
    </location>
    <ligand>
        <name>FMN</name>
        <dbReference type="ChEBI" id="CHEBI:58210"/>
    </ligand>
</feature>
<feature type="binding site" evidence="1">
    <location>
        <position position="302"/>
    </location>
    <ligand>
        <name>FMN</name>
        <dbReference type="ChEBI" id="CHEBI:58210"/>
    </ligand>
</feature>
<feature type="binding site" evidence="1">
    <location>
        <begin position="317"/>
        <end position="321"/>
    </location>
    <ligand>
        <name>FMN</name>
        <dbReference type="ChEBI" id="CHEBI:58210"/>
    </ligand>
</feature>
<feature type="binding site" evidence="1">
    <location>
        <position position="343"/>
    </location>
    <ligand>
        <name>FMN</name>
        <dbReference type="ChEBI" id="CHEBI:58210"/>
    </ligand>
</feature>
<organism>
    <name type="scientific">Chlorobium limicola (strain DSM 245 / NBRC 103803 / 6330)</name>
    <dbReference type="NCBI Taxonomy" id="290315"/>
    <lineage>
        <taxon>Bacteria</taxon>
        <taxon>Pseudomonadati</taxon>
        <taxon>Chlorobiota</taxon>
        <taxon>Chlorobiia</taxon>
        <taxon>Chlorobiales</taxon>
        <taxon>Chlorobiaceae</taxon>
        <taxon>Chlorobium/Pelodictyon group</taxon>
        <taxon>Chlorobium</taxon>
    </lineage>
</organism>
<protein>
    <recommendedName>
        <fullName evidence="1">Chorismate synthase</fullName>
        <shortName evidence="1">CS</shortName>
        <ecNumber evidence="1">4.2.3.5</ecNumber>
    </recommendedName>
    <alternativeName>
        <fullName evidence="1">5-enolpyruvylshikimate-3-phosphate phospholyase</fullName>
    </alternativeName>
</protein>
<reference key="1">
    <citation type="submission" date="2008-05" db="EMBL/GenBank/DDBJ databases">
        <title>Complete sequence of Chlorobium limicola DSM 245.</title>
        <authorList>
            <consortium name="US DOE Joint Genome Institute"/>
            <person name="Lucas S."/>
            <person name="Copeland A."/>
            <person name="Lapidus A."/>
            <person name="Glavina del Rio T."/>
            <person name="Dalin E."/>
            <person name="Tice H."/>
            <person name="Bruce D."/>
            <person name="Goodwin L."/>
            <person name="Pitluck S."/>
            <person name="Schmutz J."/>
            <person name="Larimer F."/>
            <person name="Land M."/>
            <person name="Hauser L."/>
            <person name="Kyrpides N."/>
            <person name="Ovchinnikova G."/>
            <person name="Zhao F."/>
            <person name="Li T."/>
            <person name="Liu Z."/>
            <person name="Overmann J."/>
            <person name="Bryant D.A."/>
            <person name="Richardson P."/>
        </authorList>
    </citation>
    <scope>NUCLEOTIDE SEQUENCE [LARGE SCALE GENOMIC DNA]</scope>
    <source>
        <strain>DSM 245 / NBRC 103803 / 6330</strain>
    </source>
</reference>